<dbReference type="EMBL" id="AK146977">
    <property type="protein sequence ID" value="BAE27581.1"/>
    <property type="molecule type" value="mRNA"/>
</dbReference>
<dbReference type="EMBL" id="AK147107">
    <property type="protein sequence ID" value="BAE27679.1"/>
    <property type="molecule type" value="mRNA"/>
</dbReference>
<dbReference type="EMBL" id="BC023498">
    <property type="protein sequence ID" value="AAH23498.1"/>
    <property type="molecule type" value="mRNA"/>
</dbReference>
<dbReference type="EMBL" id="AB052762">
    <property type="protein sequence ID" value="BAC53795.1"/>
    <property type="molecule type" value="mRNA"/>
</dbReference>
<dbReference type="CCDS" id="CCDS27578.1">
    <molecule id="Q78IQ7-1"/>
</dbReference>
<dbReference type="RefSeq" id="NP_082340.1">
    <molecule id="Q78IQ7-1"/>
    <property type="nucleotide sequence ID" value="NM_028064.3"/>
</dbReference>
<dbReference type="SMR" id="Q78IQ7"/>
<dbReference type="FunCoup" id="Q78IQ7">
    <property type="interactions" value="71"/>
</dbReference>
<dbReference type="STRING" id="10090.ENSMUSP00000155442"/>
<dbReference type="GlyCosmos" id="Q78IQ7">
    <property type="glycosylation" value="4 sites, No reported glycans"/>
</dbReference>
<dbReference type="GlyGen" id="Q78IQ7">
    <property type="glycosylation" value="4 sites, 1 N-linked glycan (1 site)"/>
</dbReference>
<dbReference type="iPTMnet" id="Q78IQ7"/>
<dbReference type="PhosphoSitePlus" id="Q78IQ7"/>
<dbReference type="SwissPalm" id="Q78IQ7"/>
<dbReference type="jPOST" id="Q78IQ7"/>
<dbReference type="PaxDb" id="10090-ENSMUSP00000073134"/>
<dbReference type="ProteomicsDB" id="260784">
    <molecule id="Q78IQ7-1"/>
</dbReference>
<dbReference type="ProteomicsDB" id="260785">
    <molecule id="Q78IQ7-2"/>
</dbReference>
<dbReference type="Antibodypedia" id="28508">
    <property type="antibodies" value="219 antibodies from 32 providers"/>
</dbReference>
<dbReference type="DNASU" id="72027"/>
<dbReference type="Ensembl" id="ENSMUST00000230977.2">
    <molecule id="Q78IQ7-1"/>
    <property type="protein sequence ID" value="ENSMUSP00000155442.2"/>
    <property type="gene ID" value="ENSMUSG00000063354.8"/>
</dbReference>
<dbReference type="GeneID" id="72027"/>
<dbReference type="KEGG" id="mmu:72027"/>
<dbReference type="UCSC" id="uc007wlb.1">
    <molecule id="Q78IQ7-1"/>
    <property type="organism name" value="mouse"/>
</dbReference>
<dbReference type="AGR" id="MGI:1919277"/>
<dbReference type="CTD" id="55630"/>
<dbReference type="MGI" id="MGI:1919277">
    <property type="gene designation" value="Slc39a4"/>
</dbReference>
<dbReference type="VEuPathDB" id="HostDB:ENSMUSG00000063354"/>
<dbReference type="eggNOG" id="KOG2693">
    <property type="taxonomic scope" value="Eukaryota"/>
</dbReference>
<dbReference type="GeneTree" id="ENSGT00940000160042"/>
<dbReference type="HOGENOM" id="CLU_015114_12_0_1"/>
<dbReference type="InParanoid" id="Q78IQ7"/>
<dbReference type="OMA" id="PPKQPHE"/>
<dbReference type="OrthoDB" id="200954at2759"/>
<dbReference type="PhylomeDB" id="Q78IQ7"/>
<dbReference type="TreeFam" id="TF318470"/>
<dbReference type="Reactome" id="R-MMU-442380">
    <property type="pathway name" value="Zinc influx into cells by the SLC39 gene family"/>
</dbReference>
<dbReference type="BioGRID-ORCS" id="72027">
    <property type="hits" value="2 hits in 78 CRISPR screens"/>
</dbReference>
<dbReference type="PRO" id="PR:Q78IQ7"/>
<dbReference type="Proteomes" id="UP000000589">
    <property type="component" value="Chromosome 15"/>
</dbReference>
<dbReference type="RNAct" id="Q78IQ7">
    <property type="molecule type" value="protein"/>
</dbReference>
<dbReference type="Bgee" id="ENSMUSG00000063354">
    <property type="expression patterns" value="Expressed in small intestine Peyer's patch and 95 other cell types or tissues"/>
</dbReference>
<dbReference type="ExpressionAtlas" id="Q78IQ7">
    <property type="expression patterns" value="baseline and differential"/>
</dbReference>
<dbReference type="GO" id="GO:0016324">
    <property type="term" value="C:apical plasma membrane"/>
    <property type="evidence" value="ECO:0000314"/>
    <property type="project" value="MGI"/>
</dbReference>
<dbReference type="GO" id="GO:0031410">
    <property type="term" value="C:cytoplasmic vesicle"/>
    <property type="evidence" value="ECO:0000314"/>
    <property type="project" value="MGI"/>
</dbReference>
<dbReference type="GO" id="GO:0005768">
    <property type="term" value="C:endosome"/>
    <property type="evidence" value="ECO:0000314"/>
    <property type="project" value="MGI"/>
</dbReference>
<dbReference type="GO" id="GO:0005886">
    <property type="term" value="C:plasma membrane"/>
    <property type="evidence" value="ECO:0000314"/>
    <property type="project" value="MGI"/>
</dbReference>
<dbReference type="GO" id="GO:0055038">
    <property type="term" value="C:recycling endosome membrane"/>
    <property type="evidence" value="ECO:0000314"/>
    <property type="project" value="UniProtKB"/>
</dbReference>
<dbReference type="GO" id="GO:0042802">
    <property type="term" value="F:identical protein binding"/>
    <property type="evidence" value="ECO:0000314"/>
    <property type="project" value="UniProtKB"/>
</dbReference>
<dbReference type="GO" id="GO:0008270">
    <property type="term" value="F:zinc ion binding"/>
    <property type="evidence" value="ECO:0007669"/>
    <property type="project" value="Ensembl"/>
</dbReference>
<dbReference type="GO" id="GO:0106219">
    <property type="term" value="F:zinc ion sensor activity"/>
    <property type="evidence" value="ECO:0000250"/>
    <property type="project" value="UniProtKB"/>
</dbReference>
<dbReference type="GO" id="GO:0140486">
    <property type="term" value="F:zinc ion sequestering activity"/>
    <property type="evidence" value="ECO:0007669"/>
    <property type="project" value="Ensembl"/>
</dbReference>
<dbReference type="GO" id="GO:0005385">
    <property type="term" value="F:zinc ion transmembrane transporter activity"/>
    <property type="evidence" value="ECO:0000314"/>
    <property type="project" value="MGI"/>
</dbReference>
<dbReference type="GO" id="GO:0034224">
    <property type="term" value="P:cellular response to zinc ion starvation"/>
    <property type="evidence" value="ECO:0000314"/>
    <property type="project" value="MGI"/>
</dbReference>
<dbReference type="GO" id="GO:0006882">
    <property type="term" value="P:intracellular zinc ion homeostasis"/>
    <property type="evidence" value="ECO:0000314"/>
    <property type="project" value="MGI"/>
</dbReference>
<dbReference type="GO" id="GO:0006829">
    <property type="term" value="P:zinc ion transport"/>
    <property type="evidence" value="ECO:0000314"/>
    <property type="project" value="MGI"/>
</dbReference>
<dbReference type="InterPro" id="IPR003689">
    <property type="entry name" value="ZIP"/>
</dbReference>
<dbReference type="InterPro" id="IPR049406">
    <property type="entry name" value="ZIP4_12_EF-hand"/>
</dbReference>
<dbReference type="InterPro" id="IPR041137">
    <property type="entry name" value="ZIP4_N"/>
</dbReference>
<dbReference type="InterPro" id="IPR050799">
    <property type="entry name" value="ZIP_Transporter"/>
</dbReference>
<dbReference type="PANTHER" id="PTHR12191">
    <property type="entry name" value="SOLUTE CARRIER FAMILY 39"/>
    <property type="match status" value="1"/>
</dbReference>
<dbReference type="PANTHER" id="PTHR12191:SF21">
    <property type="entry name" value="ZINC TRANSPORTER ZIP4"/>
    <property type="match status" value="1"/>
</dbReference>
<dbReference type="Pfam" id="PF21116">
    <property type="entry name" value="EF-hand_Zip"/>
    <property type="match status" value="1"/>
</dbReference>
<dbReference type="Pfam" id="PF02535">
    <property type="entry name" value="Zip"/>
    <property type="match status" value="1"/>
</dbReference>
<dbReference type="Pfam" id="PF18292">
    <property type="entry name" value="ZIP4_domain"/>
    <property type="match status" value="1"/>
</dbReference>
<comment type="function">
    <text evidence="3 6 7 8">Selective transporter that mediates the uptake of Zn(2+) (PubMed:12801924, PubMed:14612438, PubMed:14709598). Plays an essential role for dietary zinc uptake from small intestine (PubMed:12801924). The Zn(2+) uniporter activity is regulated by zinc availability (By similarity). Also exhibits polyspecific binding and transport of Cu(2+), Cd(2+) and possibly Ni(2+) but at higher concentrations (PubMed:12801924).</text>
</comment>
<comment type="catalytic activity">
    <reaction evidence="6 7 8">
        <text>Zn(2+)(in) = Zn(2+)(out)</text>
        <dbReference type="Rhea" id="RHEA:29351"/>
        <dbReference type="ChEBI" id="CHEBI:29105"/>
    </reaction>
</comment>
<comment type="biophysicochemical properties">
    <kinetics>
        <KM evidence="8">1.7 uM for Zn(2+)</KM>
        <KM evidence="6">1.6 uM for Zn(2+)</KM>
        <Vmax evidence="8">8.9 pmol/min/mg enzyme with Zn(2+) as substrate</Vmax>
        <Vmax evidence="6">13.1 pmol/min/mg enzyme with Zn(2+) as substrate</Vmax>
    </kinetics>
</comment>
<comment type="subunit">
    <text evidence="3 13">Homodimer (PubMed:30593504). Homodimerization is mediated by the transmembrane domain (By similarity).</text>
</comment>
<comment type="subcellular location">
    <subcellularLocation>
        <location evidence="7 8 10 13">Cell membrane</location>
        <topology evidence="1">Multi-pass membrane protein</topology>
    </subcellularLocation>
    <subcellularLocation>
        <location evidence="7">Recycling endosome membrane</location>
        <topology evidence="1">Multi-pass membrane protein</topology>
    </subcellularLocation>
    <subcellularLocation>
        <location evidence="6 10 11">Apical cell membrane</location>
        <topology evidence="1">Multi-pass membrane protein</topology>
    </subcellularLocation>
    <text evidence="6 7 10 11 13">Colocalized with TFRC in the recycling endosomes. Cycles between endosomal compartments and the plasma membrane in response to Zn(2+) availability. Zn(2+) deficiency promotes accumulation of SLC39A4 on the surface membrane, whereas high extracellular Zn(2+) levels induce internalization of SLC39A4, but also trigger drastic removal of cellular SLC39A4 via proteasomal and lysosomal degradation pathways (PubMed:14612438, PubMed:18020946, PubMed:30593504). Translocates to the apical membrane during zinc deficiency (PubMed:12801924, PubMed:18020946). Expressed on the apical surface of the intestinal wall (PubMed:18936158).</text>
</comment>
<comment type="alternative products">
    <event type="alternative splicing"/>
    <isoform>
        <id>Q78IQ7-1</id>
        <name>1</name>
        <name>Long</name>
        <sequence type="displayed"/>
    </isoform>
    <isoform>
        <id>Q78IQ7-2</id>
        <name>2</name>
        <name>Short</name>
        <sequence type="described" ref="VSP_015913 VSP_015914"/>
    </isoform>
</comment>
<comment type="tissue specificity">
    <text evidence="6 9">Highly expressed in the small intestine and embryonic visceral yolk sac. Weakly expressed in the stomach and liver.</text>
</comment>
<comment type="induction">
    <text evidence="6">Up-regulated under conditions of dietary zinc deficiency. Down-regulated under conditions of dietary zinc excess.</text>
</comment>
<comment type="domain">
    <text evidence="3">The two metal binding sites M1 and M2 that are halfway through the membrane form a binuclear metal center. M1 is essential to Zn(2+) transport, while the other, M2 appears to have an auxiliary role presumably by acting as an additional transport site that can modulate the properties of the primary transport site. The binuclear metal center plays a key role in Zn(2+) sensing.</text>
</comment>
<comment type="PTM">
    <text evidence="11 13">The extracellular N-terminal ectodomain is cleaved when cells are Zn(2+) deficient, N-terminally cleaved SLC39A4 is then internalized faster.</text>
</comment>
<comment type="PTM">
    <text evidence="16">Under excess Zn(2+) conditions, SLC39A4 on the cell surface is rapidly endocytosed, ubiquitinated, and degraded.</text>
</comment>
<comment type="PTM">
    <text evidence="8">N-glycosylated.</text>
</comment>
<comment type="disruption phenotype">
    <text evidence="9 12">Knockout mice die in utero during early development. Mice heterozygous for a null allele exhibit developmental defects similar to the teratology of zinc deficiency (PubMed:17483098). Slc39a4-intestine knockout mice reveal that total zinc is dramatically and rapidly decreased in these organs whereas iron, manganese, and copper slowly accumulated to high levels in the liver as the disease progressed. Defect in zinc uptake are followed by a switch from anabolic to catabolic metabolism in the mouse leading to dramatic weight loss, dyshomeostasis of several essential metals and ultimately lethality in the absence of excess dietary zinc (PubMed:22737083).</text>
</comment>
<comment type="similarity">
    <text evidence="15">Belongs to the ZIP transporter (TC 2.A.5) family.</text>
</comment>
<organism>
    <name type="scientific">Mus musculus</name>
    <name type="common">Mouse</name>
    <dbReference type="NCBI Taxonomy" id="10090"/>
    <lineage>
        <taxon>Eukaryota</taxon>
        <taxon>Metazoa</taxon>
        <taxon>Chordata</taxon>
        <taxon>Craniata</taxon>
        <taxon>Vertebrata</taxon>
        <taxon>Euteleostomi</taxon>
        <taxon>Mammalia</taxon>
        <taxon>Eutheria</taxon>
        <taxon>Euarchontoglires</taxon>
        <taxon>Glires</taxon>
        <taxon>Rodentia</taxon>
        <taxon>Myomorpha</taxon>
        <taxon>Muroidea</taxon>
        <taxon>Muridae</taxon>
        <taxon>Murinae</taxon>
        <taxon>Mus</taxon>
        <taxon>Mus</taxon>
    </lineage>
</organism>
<proteinExistence type="evidence at protein level"/>
<protein>
    <recommendedName>
        <fullName>Zinc transporter ZIP4</fullName>
    </recommendedName>
    <alternativeName>
        <fullName>Activated in W/Wv mouse stomach 2</fullName>
        <shortName>mAWMS2</shortName>
    </alternativeName>
    <alternativeName>
        <fullName>Solute carrier family 39 member 4</fullName>
    </alternativeName>
    <alternativeName>
        <fullName>Zrt- and Irt-like protein 4</fullName>
        <shortName>ZIP-4</shortName>
    </alternativeName>
</protein>
<keyword id="KW-0025">Alternative splicing</keyword>
<keyword id="KW-1003">Cell membrane</keyword>
<keyword id="KW-1015">Disulfide bond</keyword>
<keyword id="KW-0967">Endosome</keyword>
<keyword id="KW-0325">Glycoprotein</keyword>
<keyword id="KW-0406">Ion transport</keyword>
<keyword id="KW-0472">Membrane</keyword>
<keyword id="KW-0479">Metal-binding</keyword>
<keyword id="KW-1185">Reference proteome</keyword>
<keyword id="KW-0732">Signal</keyword>
<keyword id="KW-0812">Transmembrane</keyword>
<keyword id="KW-1133">Transmembrane helix</keyword>
<keyword id="KW-0813">Transport</keyword>
<keyword id="KW-0832">Ubl conjugation</keyword>
<keyword id="KW-0862">Zinc</keyword>
<keyword id="KW-0864">Zinc transport</keyword>
<accession>Q78IQ7</accession>
<accession>Q8CHL4</accession>
<reference key="1">
    <citation type="journal article" date="2003" name="J. Biol. Chem.">
        <title>The acrodermatitis enteropathica gene ZIP4 encodes a tissue-specific, zinc-regulated zinc transporter in mice.</title>
        <authorList>
            <person name="Dufner-Beattie J."/>
            <person name="Wang F."/>
            <person name="Kuo Y.-M."/>
            <person name="Gitschier J."/>
            <person name="Eide D."/>
            <person name="Andrews G.K."/>
        </authorList>
    </citation>
    <scope>NUCLEOTIDE SEQUENCE [MRNA] (ISOFORMS 1 AND 2)</scope>
    <scope>FUNCTION</scope>
    <scope>TRANSPORTER ACTIVITY</scope>
    <scope>BIOPHYSICOCHEMICAL PROPERTIES</scope>
    <scope>TISSUE SPECIFICITY</scope>
    <scope>INDUCTION</scope>
    <scope>SUBCELLULAR LOCATION</scope>
</reference>
<reference key="2">
    <citation type="journal article" date="2005" name="Science">
        <title>The transcriptional landscape of the mammalian genome.</title>
        <authorList>
            <person name="Carninci P."/>
            <person name="Kasukawa T."/>
            <person name="Katayama S."/>
            <person name="Gough J."/>
            <person name="Frith M.C."/>
            <person name="Maeda N."/>
            <person name="Oyama R."/>
            <person name="Ravasi T."/>
            <person name="Lenhard B."/>
            <person name="Wells C."/>
            <person name="Kodzius R."/>
            <person name="Shimokawa K."/>
            <person name="Bajic V.B."/>
            <person name="Brenner S.E."/>
            <person name="Batalov S."/>
            <person name="Forrest A.R."/>
            <person name="Zavolan M."/>
            <person name="Davis M.J."/>
            <person name="Wilming L.G."/>
            <person name="Aidinis V."/>
            <person name="Allen J.E."/>
            <person name="Ambesi-Impiombato A."/>
            <person name="Apweiler R."/>
            <person name="Aturaliya R.N."/>
            <person name="Bailey T.L."/>
            <person name="Bansal M."/>
            <person name="Baxter L."/>
            <person name="Beisel K.W."/>
            <person name="Bersano T."/>
            <person name="Bono H."/>
            <person name="Chalk A.M."/>
            <person name="Chiu K.P."/>
            <person name="Choudhary V."/>
            <person name="Christoffels A."/>
            <person name="Clutterbuck D.R."/>
            <person name="Crowe M.L."/>
            <person name="Dalla E."/>
            <person name="Dalrymple B.P."/>
            <person name="de Bono B."/>
            <person name="Della Gatta G."/>
            <person name="di Bernardo D."/>
            <person name="Down T."/>
            <person name="Engstrom P."/>
            <person name="Fagiolini M."/>
            <person name="Faulkner G."/>
            <person name="Fletcher C.F."/>
            <person name="Fukushima T."/>
            <person name="Furuno M."/>
            <person name="Futaki S."/>
            <person name="Gariboldi M."/>
            <person name="Georgii-Hemming P."/>
            <person name="Gingeras T.R."/>
            <person name="Gojobori T."/>
            <person name="Green R.E."/>
            <person name="Gustincich S."/>
            <person name="Harbers M."/>
            <person name="Hayashi Y."/>
            <person name="Hensch T.K."/>
            <person name="Hirokawa N."/>
            <person name="Hill D."/>
            <person name="Huminiecki L."/>
            <person name="Iacono M."/>
            <person name="Ikeo K."/>
            <person name="Iwama A."/>
            <person name="Ishikawa T."/>
            <person name="Jakt M."/>
            <person name="Kanapin A."/>
            <person name="Katoh M."/>
            <person name="Kawasawa Y."/>
            <person name="Kelso J."/>
            <person name="Kitamura H."/>
            <person name="Kitano H."/>
            <person name="Kollias G."/>
            <person name="Krishnan S.P."/>
            <person name="Kruger A."/>
            <person name="Kummerfeld S.K."/>
            <person name="Kurochkin I.V."/>
            <person name="Lareau L.F."/>
            <person name="Lazarevic D."/>
            <person name="Lipovich L."/>
            <person name="Liu J."/>
            <person name="Liuni S."/>
            <person name="McWilliam S."/>
            <person name="Madan Babu M."/>
            <person name="Madera M."/>
            <person name="Marchionni L."/>
            <person name="Matsuda H."/>
            <person name="Matsuzawa S."/>
            <person name="Miki H."/>
            <person name="Mignone F."/>
            <person name="Miyake S."/>
            <person name="Morris K."/>
            <person name="Mottagui-Tabar S."/>
            <person name="Mulder N."/>
            <person name="Nakano N."/>
            <person name="Nakauchi H."/>
            <person name="Ng P."/>
            <person name="Nilsson R."/>
            <person name="Nishiguchi S."/>
            <person name="Nishikawa S."/>
            <person name="Nori F."/>
            <person name="Ohara O."/>
            <person name="Okazaki Y."/>
            <person name="Orlando V."/>
            <person name="Pang K.C."/>
            <person name="Pavan W.J."/>
            <person name="Pavesi G."/>
            <person name="Pesole G."/>
            <person name="Petrovsky N."/>
            <person name="Piazza S."/>
            <person name="Reed J."/>
            <person name="Reid J.F."/>
            <person name="Ring B.Z."/>
            <person name="Ringwald M."/>
            <person name="Rost B."/>
            <person name="Ruan Y."/>
            <person name="Salzberg S.L."/>
            <person name="Sandelin A."/>
            <person name="Schneider C."/>
            <person name="Schoenbach C."/>
            <person name="Sekiguchi K."/>
            <person name="Semple C.A."/>
            <person name="Seno S."/>
            <person name="Sessa L."/>
            <person name="Sheng Y."/>
            <person name="Shibata Y."/>
            <person name="Shimada H."/>
            <person name="Shimada K."/>
            <person name="Silva D."/>
            <person name="Sinclair B."/>
            <person name="Sperling S."/>
            <person name="Stupka E."/>
            <person name="Sugiura K."/>
            <person name="Sultana R."/>
            <person name="Takenaka Y."/>
            <person name="Taki K."/>
            <person name="Tammoja K."/>
            <person name="Tan S.L."/>
            <person name="Tang S."/>
            <person name="Taylor M.S."/>
            <person name="Tegner J."/>
            <person name="Teichmann S.A."/>
            <person name="Ueda H.R."/>
            <person name="van Nimwegen E."/>
            <person name="Verardo R."/>
            <person name="Wei C.L."/>
            <person name="Yagi K."/>
            <person name="Yamanishi H."/>
            <person name="Zabarovsky E."/>
            <person name="Zhu S."/>
            <person name="Zimmer A."/>
            <person name="Hide W."/>
            <person name="Bult C."/>
            <person name="Grimmond S.M."/>
            <person name="Teasdale R.D."/>
            <person name="Liu E.T."/>
            <person name="Brusic V."/>
            <person name="Quackenbush J."/>
            <person name="Wahlestedt C."/>
            <person name="Mattick J.S."/>
            <person name="Hume D.A."/>
            <person name="Kai C."/>
            <person name="Sasaki D."/>
            <person name="Tomaru Y."/>
            <person name="Fukuda S."/>
            <person name="Kanamori-Katayama M."/>
            <person name="Suzuki M."/>
            <person name="Aoki J."/>
            <person name="Arakawa T."/>
            <person name="Iida J."/>
            <person name="Imamura K."/>
            <person name="Itoh M."/>
            <person name="Kato T."/>
            <person name="Kawaji H."/>
            <person name="Kawagashira N."/>
            <person name="Kawashima T."/>
            <person name="Kojima M."/>
            <person name="Kondo S."/>
            <person name="Konno H."/>
            <person name="Nakano K."/>
            <person name="Ninomiya N."/>
            <person name="Nishio T."/>
            <person name="Okada M."/>
            <person name="Plessy C."/>
            <person name="Shibata K."/>
            <person name="Shiraki T."/>
            <person name="Suzuki S."/>
            <person name="Tagami M."/>
            <person name="Waki K."/>
            <person name="Watahiki A."/>
            <person name="Okamura-Oho Y."/>
            <person name="Suzuki H."/>
            <person name="Kawai J."/>
            <person name="Hayashizaki Y."/>
        </authorList>
    </citation>
    <scope>NUCLEOTIDE SEQUENCE [LARGE SCALE MRNA] (ISOFORM 1)</scope>
    <source>
        <strain>C57BL/6J</strain>
        <tissue>Stomach</tissue>
    </source>
</reference>
<reference key="3">
    <citation type="journal article" date="2004" name="Genome Res.">
        <title>The status, quality, and expansion of the NIH full-length cDNA project: the Mammalian Gene Collection (MGC).</title>
        <authorList>
            <consortium name="The MGC Project Team"/>
        </authorList>
    </citation>
    <scope>NUCLEOTIDE SEQUENCE [LARGE SCALE MRNA] (ISOFORM 1)</scope>
    <source>
        <strain>FVB/N-3</strain>
        <tissue>Mammary tumor</tissue>
    </source>
</reference>
<reference key="4">
    <citation type="submission" date="2000-12" db="EMBL/GenBank/DDBJ databases">
        <title>Isolation and characterization of novel human and mouse genes, which are expressed in the digestive tract.</title>
        <authorList>
            <person name="Daigo Y."/>
            <person name="Takayama I."/>
            <person name="Fujino M.A."/>
        </authorList>
    </citation>
    <scope>NUCLEOTIDE SEQUENCE [MRNA] OF 431-660</scope>
</reference>
<reference key="5">
    <citation type="journal article" date="2004" name="J. Biol. Chem.">
        <title>Zn2+-stimulated endocytosis of the mZIP4 zinc transporter regulates its location at the plasma membrane.</title>
        <authorList>
            <person name="Kim B.-E."/>
            <person name="Wang F."/>
            <person name="Dufner-Beattie J."/>
            <person name="Andrews G.K."/>
            <person name="Eide D.J."/>
            <person name="Petris M.J."/>
        </authorList>
    </citation>
    <scope>SUBCELLULAR LOCATION</scope>
    <scope>FUNCTION</scope>
    <scope>TRANSPORTER ACTIVITY</scope>
</reference>
<reference key="6">
    <citation type="journal article" date="2004" name="Hum. Mol. Genet.">
        <title>Acrodermatitis enteropathica mutations affect transport activity, localization and zinc-responsive trafficking of the mouse ZIP4 zinc transporter.</title>
        <authorList>
            <person name="Wang F."/>
            <person name="Kim B.E."/>
            <person name="Dufner-Beattie J."/>
            <person name="Petris M.J."/>
            <person name="Andrews G."/>
            <person name="Eide D.J."/>
        </authorList>
    </citation>
    <scope>FUNCTION</scope>
    <scope>TRANSPORTER ACTIVITY</scope>
    <scope>BIOPHYSICOCHEMICAL PROPERTIES</scope>
    <scope>SUBCELLULAR LOCATION</scope>
    <scope>GLYCOSYLATION</scope>
    <scope>MUTAGENESIS OF PRO-200; GLY-340; LEU-382; GLY-384; GLY-539 AND GLY-643</scope>
</reference>
<reference key="7">
    <citation type="journal article" date="2007" name="Hum. Mol. Genet.">
        <title>The mouse acrodermatitis enteropathica gene Slc39a4 (Zip4) is essential for early development and heterozygosity causes hypersensitivity to zinc deficiency.</title>
        <authorList>
            <person name="Dufner-Beattie J."/>
            <person name="Weaver B.P."/>
            <person name="Geiser J."/>
            <person name="Bilgen M."/>
            <person name="Larson M."/>
            <person name="Xu W."/>
            <person name="Andrews G.K."/>
        </authorList>
    </citation>
    <scope>DISRUPTION PHENOTYPE</scope>
    <scope>TISSUE SPECIFICITY</scope>
</reference>
<reference key="8">
    <citation type="journal article" date="2007" name="Biol. Chem.">
        <title>Novel zinc-responsive post-transcriptional mechanisms reciprocally regulate expression of the mouse Slc39a4 and Slc39a5 zinc transporters (Zip4 and Zip5).</title>
        <authorList>
            <person name="Weaver B.P."/>
            <person name="Dufner-Beattie J."/>
            <person name="Kambe T."/>
            <person name="Andrews G.K."/>
        </authorList>
    </citation>
    <scope>SUBCELLULAR LOCATION</scope>
</reference>
<reference key="9">
    <citation type="journal article" date="2007" name="Proc. Natl. Acad. Sci. U.S.A.">
        <title>Large-scale phosphorylation analysis of mouse liver.</title>
        <authorList>
            <person name="Villen J."/>
            <person name="Beausoleil S.A."/>
            <person name="Gerber S.A."/>
            <person name="Gygi S.P."/>
        </authorList>
    </citation>
    <scope>IDENTIFICATION BY MASS SPECTROMETRY [LARGE SCALE ANALYSIS]</scope>
    <source>
        <tissue>Liver</tissue>
    </source>
</reference>
<reference key="10">
    <citation type="journal article" date="2009" name="Mol. Cell. Biol.">
        <title>Novel proteolytic processing of the ectodomain of the zinc transporter ZIP4 (SLC39A4) during zinc deficiency is inhibited by acrodermatitis enteropathica mutations.</title>
        <authorList>
            <person name="Kambe T."/>
            <person name="Andrews G.K."/>
        </authorList>
    </citation>
    <scope>SUBCELLULAR LOCATION</scope>
    <scope>PROTEOLYTIC CLEAVAGE</scope>
</reference>
<reference key="11">
    <citation type="journal article" date="2010" name="Cell">
        <title>A tissue-specific atlas of mouse protein phosphorylation and expression.</title>
        <authorList>
            <person name="Huttlin E.L."/>
            <person name="Jedrychowski M.P."/>
            <person name="Elias J.E."/>
            <person name="Goswami T."/>
            <person name="Rad R."/>
            <person name="Beausoleil S.A."/>
            <person name="Villen J."/>
            <person name="Haas W."/>
            <person name="Sowa M.E."/>
            <person name="Gygi S.P."/>
        </authorList>
    </citation>
    <scope>IDENTIFICATION BY MASS SPECTROMETRY [LARGE SCALE ANALYSIS]</scope>
    <source>
        <tissue>Lung</tissue>
    </source>
</reference>
<reference key="12">
    <citation type="journal article" date="2012" name="PLoS Genet.">
        <title>A mouse model of acrodermatitis enteropathica: loss of intestine zinc transporter ZIP4 (Slc39a4) disrupts the stem cell niche and intestine integrity.</title>
        <authorList>
            <person name="Geiser J."/>
            <person name="Venken K.J."/>
            <person name="De Lisle R.C."/>
            <person name="Andrews G.K."/>
        </authorList>
    </citation>
    <scope>FUNCTION</scope>
    <scope>DISRUPTION PHENOTYPE</scope>
</reference>
<reference key="13">
    <citation type="journal article" date="2019" name="J. Biol. Chem.">
        <title>An extracellular histidine-containing motif in the zinc transporter ZIP4 plays a role in zinc sensing and zinc-induced endocytosis in mammalian cells.</title>
        <authorList>
            <person name="Chun H."/>
            <person name="Korolnek T."/>
            <person name="Lee C.J."/>
            <person name="Coyne H.J. III"/>
            <person name="Winge D.R."/>
            <person name="Kim B.E."/>
            <person name="Petris M.J."/>
        </authorList>
    </citation>
    <scope>SUBUNIT</scope>
    <scope>SUBCELLULAR LOCATION</scope>
</reference>
<name>S39A4_MOUSE</name>
<feature type="signal peptide" evidence="4">
    <location>
        <begin position="1"/>
        <end position="22"/>
    </location>
</feature>
<feature type="chain" id="PRO_0000042621" description="Zinc transporter ZIP4">
    <location>
        <begin position="23"/>
        <end position="660"/>
    </location>
</feature>
<feature type="topological domain" description="Extracellular" evidence="4">
    <location>
        <begin position="23"/>
        <end position="337"/>
    </location>
</feature>
<feature type="transmembrane region" description="Helical; Name=1" evidence="1">
    <location>
        <begin position="338"/>
        <end position="358"/>
    </location>
</feature>
<feature type="topological domain" description="Cytoplasmic" evidence="4">
    <location>
        <begin position="359"/>
        <end position="376"/>
    </location>
</feature>
<feature type="transmembrane region" description="Helical; Name=2" evidence="1">
    <location>
        <begin position="377"/>
        <end position="397"/>
    </location>
</feature>
<feature type="topological domain" description="Extracellular" evidence="4">
    <location>
        <begin position="398"/>
        <end position="420"/>
    </location>
</feature>
<feature type="transmembrane region" description="Helical; Name=3" evidence="1">
    <location>
        <begin position="421"/>
        <end position="441"/>
    </location>
</feature>
<feature type="topological domain" description="Cytoplasmic" evidence="4">
    <location>
        <begin position="442"/>
        <end position="511"/>
    </location>
</feature>
<feature type="transmembrane region" description="Helical; Name=4" evidence="1">
    <location>
        <begin position="512"/>
        <end position="531"/>
    </location>
</feature>
<feature type="topological domain" description="Extracellular" evidence="4">
    <location>
        <begin position="532"/>
        <end position="539"/>
    </location>
</feature>
<feature type="transmembrane region" description="Helical; Name=5" evidence="1">
    <location>
        <begin position="540"/>
        <end position="566"/>
    </location>
</feature>
<feature type="topological domain" description="Cytoplasmic" evidence="4">
    <location>
        <begin position="567"/>
        <end position="571"/>
    </location>
</feature>
<feature type="transmembrane region" description="Helical; Name=6" evidence="1">
    <location>
        <begin position="572"/>
        <end position="592"/>
    </location>
</feature>
<feature type="topological domain" description="Extracellular" evidence="4">
    <location>
        <begin position="593"/>
        <end position="599"/>
    </location>
</feature>
<feature type="transmembrane region" description="Helical; Name=7" evidence="1">
    <location>
        <begin position="600"/>
        <end position="620"/>
    </location>
</feature>
<feature type="topological domain" description="Cytoplasmic" evidence="4">
    <location>
        <begin position="621"/>
        <end position="630"/>
    </location>
</feature>
<feature type="transmembrane region" description="Helical; Name=8" evidence="1">
    <location>
        <begin position="631"/>
        <end position="651"/>
    </location>
</feature>
<feature type="topological domain" description="Extracellular" evidence="4">
    <location>
        <begin position="652"/>
        <end position="660"/>
    </location>
</feature>
<feature type="region of interest" description="Disordered" evidence="5">
    <location>
        <begin position="233"/>
        <end position="273"/>
    </location>
</feature>
<feature type="short sequence motif" description="Essential for SLC39A4 endocytosis" evidence="3">
    <location>
        <begin position="465"/>
        <end position="467"/>
    </location>
</feature>
<feature type="compositionally biased region" description="Basic and acidic residues" evidence="5">
    <location>
        <begin position="236"/>
        <end position="267"/>
    </location>
</feature>
<feature type="binding site" description="M1 metal binding site" evidence="1">
    <location>
        <position position="520"/>
    </location>
    <ligand>
        <name>Zn(2+)</name>
        <dbReference type="ChEBI" id="CHEBI:29105"/>
        <label>1</label>
    </ligand>
</feature>
<feature type="binding site" description="M2 metal binding site" evidence="1">
    <location>
        <position position="521"/>
    </location>
    <ligand>
        <name>Zn(2+)</name>
        <dbReference type="ChEBI" id="CHEBI:29105"/>
        <label>2</label>
    </ligand>
</feature>
<feature type="binding site" description="M1 metal binding site" evidence="1">
    <location>
        <position position="524"/>
    </location>
    <ligand>
        <name>Zn(2+)</name>
        <dbReference type="ChEBI" id="CHEBI:29105"/>
        <label>1</label>
    </ligand>
</feature>
<feature type="binding site" description="M2 metal binding site" evidence="1">
    <location>
        <position position="524"/>
    </location>
    <ligand>
        <name>Zn(2+)</name>
        <dbReference type="ChEBI" id="CHEBI:29105"/>
        <label>2</label>
    </ligand>
</feature>
<feature type="binding site" description="M1 metal binding site" evidence="1">
    <location>
        <position position="549"/>
    </location>
    <ligand>
        <name>Zn(2+)</name>
        <dbReference type="ChEBI" id="CHEBI:29105"/>
        <label>1</label>
    </ligand>
</feature>
<feature type="binding site" description="M2 metal binding site" evidence="1">
    <location>
        <position position="550"/>
    </location>
    <ligand>
        <name>Zn(2+)</name>
        <dbReference type="ChEBI" id="CHEBI:29105"/>
        <label>2</label>
    </ligand>
</feature>
<feature type="binding site" description="M1 metal binding site" evidence="1">
    <location>
        <position position="553"/>
    </location>
    <ligand>
        <name>Zn(2+)</name>
        <dbReference type="ChEBI" id="CHEBI:29105"/>
        <label>1</label>
    </ligand>
</feature>
<feature type="site" description="Essential role in Zn(2+) sensing" evidence="3">
    <location>
        <position position="524"/>
    </location>
</feature>
<feature type="glycosylation site" description="N-linked (GlcNAc...) asparagine" evidence="4">
    <location>
        <position position="192"/>
    </location>
</feature>
<feature type="glycosylation site" description="N-linked (GlcNAc...) asparagine" evidence="4">
    <location>
        <position position="219"/>
    </location>
</feature>
<feature type="glycosylation site" description="N-linked (GlcNAc...) asparagine" evidence="3">
    <location>
        <position position="272"/>
    </location>
</feature>
<feature type="glycosylation site" description="N-linked (GlcNAc...) asparagine" evidence="4">
    <location>
        <position position="657"/>
    </location>
</feature>
<feature type="disulfide bond" evidence="2">
    <location>
        <begin position="56"/>
        <end position="61"/>
    </location>
</feature>
<feature type="disulfide bond" evidence="2">
    <location>
        <begin position="64"/>
        <end position="110"/>
    </location>
</feature>
<feature type="disulfide bond" evidence="2">
    <location>
        <begin position="160"/>
        <end position="195"/>
    </location>
</feature>
<feature type="disulfide bond" evidence="2">
    <location>
        <begin position="280"/>
        <end position="319"/>
    </location>
</feature>
<feature type="splice variant" id="VSP_015913" description="In isoform 2." evidence="14">
    <location>
        <begin position="1"/>
        <end position="47"/>
    </location>
</feature>
<feature type="splice variant" id="VSP_015914" description="In isoform 2." evidence="14">
    <original>NTLVARVHCTDGPCEK</original>
    <variation>MPGRLSLAQILSVCPQ</variation>
    <location>
        <begin position="48"/>
        <end position="63"/>
    </location>
</feature>
<feature type="mutagenesis site" description="Reduces zinc uptake activity. Does not affect KM. Accumulated to high levels in the plasma membrane. No longer zinc responsive." evidence="8">
    <original>P</original>
    <variation>L</variation>
    <location>
        <position position="200"/>
    </location>
</feature>
<feature type="mutagenesis site" description="Reduces zinc uptake activity. Reduces plasma membrane localization." evidence="8">
    <original>G</original>
    <variation>D</variation>
    <location>
        <position position="340"/>
    </location>
</feature>
<feature type="mutagenesis site" description="Reduces zinc uptake activity. Reduces plasma membrane localization." evidence="8">
    <original>L</original>
    <variation>P</variation>
    <location>
        <position position="382"/>
    </location>
</feature>
<feature type="mutagenesis site" description="Reduces zinc uptake activity. Reduces plasma membrane localization." evidence="8">
    <original>G</original>
    <variation>R</variation>
    <location>
        <position position="384"/>
    </location>
</feature>
<feature type="mutagenesis site" description="Reduces zinc uptake activity. Accumulated to high levels in the plasma membrane. Does not affect KM. No longer zinc responsive." evidence="8">
    <original>G</original>
    <variation>R</variation>
    <location>
        <position position="539"/>
    </location>
</feature>
<feature type="mutagenesis site" description="Loss of zinc uptake activity. Abolishes plasma membrane localization." evidence="8">
    <original>G</original>
    <variation>R</variation>
    <location>
        <position position="643"/>
    </location>
</feature>
<feature type="sequence conflict" description="In Ref. 4." evidence="15" ref="4">
    <original>FFLFE</original>
    <variation>RPRVR</variation>
    <location>
        <begin position="431"/>
        <end position="435"/>
    </location>
</feature>
<gene>
    <name type="primary">Slc39a4</name>
    <name type="synonym">Zip4</name>
</gene>
<evidence type="ECO:0000250" key="1">
    <source>
        <dbReference type="UniProtKB" id="A0A0H3LM39"/>
    </source>
</evidence>
<evidence type="ECO:0000250" key="2">
    <source>
        <dbReference type="UniProtKB" id="L5KLU7"/>
    </source>
</evidence>
<evidence type="ECO:0000250" key="3">
    <source>
        <dbReference type="UniProtKB" id="Q6P5W5"/>
    </source>
</evidence>
<evidence type="ECO:0000255" key="4"/>
<evidence type="ECO:0000256" key="5">
    <source>
        <dbReference type="SAM" id="MobiDB-lite"/>
    </source>
</evidence>
<evidence type="ECO:0000269" key="6">
    <source>
    </source>
</evidence>
<evidence type="ECO:0000269" key="7">
    <source>
    </source>
</evidence>
<evidence type="ECO:0000269" key="8">
    <source>
    </source>
</evidence>
<evidence type="ECO:0000269" key="9">
    <source>
    </source>
</evidence>
<evidence type="ECO:0000269" key="10">
    <source>
    </source>
</evidence>
<evidence type="ECO:0000269" key="11">
    <source>
    </source>
</evidence>
<evidence type="ECO:0000269" key="12">
    <source>
    </source>
</evidence>
<evidence type="ECO:0000269" key="13">
    <source>
    </source>
</evidence>
<evidence type="ECO:0000303" key="14">
    <source>
    </source>
</evidence>
<evidence type="ECO:0000305" key="15"/>
<evidence type="ECO:0000305" key="16">
    <source>
    </source>
</evidence>
<sequence length="660" mass="71063">MLPKSVTQGLVLALLVGTVAVARPRNLLSLLALGQGALDRLELDGLLNTLVARVHCTDGPCEKCLSVENVLALGKPDKPQPAPESVLESRHIIYLSAAAALYLNNPEKTCKDIQAGLLASHVDDYLATLESPEAMTLGLSQLLQKIEAHAASQPTGEKTCVDLPQLLEEAEAAGVSKSAGLVLTALLDHVINGSCFQGLPSPQYFVDFVFRLHSSDPPNITLHELENLMHHLGVGGEDHSDHDDHGDHADHSHPDRKASHQDSELHTPHNSNSSVWDTLCLSAKDIMAVYGLSEEAGVSPQAWAQLTPALVQQQLSGACSPYPTIRIQDQLSQTERYLYGSLATLLICLCAVFGLLLLTCAKCSTATHYIMQTFLSLAVGALTGDALLHLIPKVLGLHTHGGEGHTHEEEVGVGGQATWRLLAVLGGFYIFFLFESFFNLLLPRDQDSEKDGPCSHGGHSHGISLQLAPSNLRQSKQTHESSRSDLVAEETPELLNPETRRLRAELRLLPYLITLGDAVHNFADGLAVGAAFSSSWKTGLATSLAVFCHELPHELGDFAALLHAGLSVKRALLLNLASALTAFAGLYVALAVGVGEEGEAWILAVATGLFLYVALCDMLPAMMNVRDQRPWLLFLLHNVGLLGGWTVLLLLSLYEDNITF</sequence>